<protein>
    <recommendedName>
        <fullName evidence="1">Small ribosomal subunit protein uS17</fullName>
    </recommendedName>
    <alternativeName>
        <fullName evidence="2">30S ribosomal protein S17</fullName>
    </alternativeName>
</protein>
<sequence length="84" mass="9716">MTDQIRTLQGRVVSDKMEKSMVVAIERVVKHPIYGKFIRRTTKLHVHDENNECGIGDVVEIRECRPLSKTKSWTLVRVVEKAIL</sequence>
<organism>
    <name type="scientific">Yersinia pseudotuberculosis serotype I (strain IP32953)</name>
    <dbReference type="NCBI Taxonomy" id="273123"/>
    <lineage>
        <taxon>Bacteria</taxon>
        <taxon>Pseudomonadati</taxon>
        <taxon>Pseudomonadota</taxon>
        <taxon>Gammaproteobacteria</taxon>
        <taxon>Enterobacterales</taxon>
        <taxon>Yersiniaceae</taxon>
        <taxon>Yersinia</taxon>
    </lineage>
</organism>
<name>RS17_YERPS</name>
<gene>
    <name evidence="1" type="primary">rpsQ</name>
    <name type="ordered locus">YPTB3689</name>
</gene>
<keyword id="KW-0687">Ribonucleoprotein</keyword>
<keyword id="KW-0689">Ribosomal protein</keyword>
<keyword id="KW-0694">RNA-binding</keyword>
<keyword id="KW-0699">rRNA-binding</keyword>
<accession>Q664T0</accession>
<reference key="1">
    <citation type="journal article" date="2004" name="Proc. Natl. Acad. Sci. U.S.A.">
        <title>Insights into the evolution of Yersinia pestis through whole-genome comparison with Yersinia pseudotuberculosis.</title>
        <authorList>
            <person name="Chain P.S.G."/>
            <person name="Carniel E."/>
            <person name="Larimer F.W."/>
            <person name="Lamerdin J."/>
            <person name="Stoutland P.O."/>
            <person name="Regala W.M."/>
            <person name="Georgescu A.M."/>
            <person name="Vergez L.M."/>
            <person name="Land M.L."/>
            <person name="Motin V.L."/>
            <person name="Brubaker R.R."/>
            <person name="Fowler J."/>
            <person name="Hinnebusch J."/>
            <person name="Marceau M."/>
            <person name="Medigue C."/>
            <person name="Simonet M."/>
            <person name="Chenal-Francisque V."/>
            <person name="Souza B."/>
            <person name="Dacheux D."/>
            <person name="Elliott J.M."/>
            <person name="Derbise A."/>
            <person name="Hauser L.J."/>
            <person name="Garcia E."/>
        </authorList>
    </citation>
    <scope>NUCLEOTIDE SEQUENCE [LARGE SCALE GENOMIC DNA]</scope>
    <source>
        <strain>IP32953</strain>
    </source>
</reference>
<proteinExistence type="inferred from homology"/>
<dbReference type="EMBL" id="BX936398">
    <property type="protein sequence ID" value="CAH22927.1"/>
    <property type="molecule type" value="Genomic_DNA"/>
</dbReference>
<dbReference type="RefSeq" id="WP_002228135.1">
    <property type="nucleotide sequence ID" value="NZ_CP009712.1"/>
</dbReference>
<dbReference type="SMR" id="Q664T0"/>
<dbReference type="GeneID" id="97454240"/>
<dbReference type="KEGG" id="ypo:BZ17_2898"/>
<dbReference type="KEGG" id="yps:YPTB3689"/>
<dbReference type="PATRIC" id="fig|273123.14.peg.3039"/>
<dbReference type="Proteomes" id="UP000001011">
    <property type="component" value="Chromosome"/>
</dbReference>
<dbReference type="GO" id="GO:0022627">
    <property type="term" value="C:cytosolic small ribosomal subunit"/>
    <property type="evidence" value="ECO:0007669"/>
    <property type="project" value="TreeGrafter"/>
</dbReference>
<dbReference type="GO" id="GO:0019843">
    <property type="term" value="F:rRNA binding"/>
    <property type="evidence" value="ECO:0007669"/>
    <property type="project" value="UniProtKB-UniRule"/>
</dbReference>
<dbReference type="GO" id="GO:0003735">
    <property type="term" value="F:structural constituent of ribosome"/>
    <property type="evidence" value="ECO:0007669"/>
    <property type="project" value="InterPro"/>
</dbReference>
<dbReference type="GO" id="GO:0006412">
    <property type="term" value="P:translation"/>
    <property type="evidence" value="ECO:0007669"/>
    <property type="project" value="UniProtKB-UniRule"/>
</dbReference>
<dbReference type="CDD" id="cd00364">
    <property type="entry name" value="Ribosomal_uS17"/>
    <property type="match status" value="1"/>
</dbReference>
<dbReference type="FunFam" id="2.40.50.140:FF:000014">
    <property type="entry name" value="30S ribosomal protein S17"/>
    <property type="match status" value="1"/>
</dbReference>
<dbReference type="Gene3D" id="2.40.50.140">
    <property type="entry name" value="Nucleic acid-binding proteins"/>
    <property type="match status" value="1"/>
</dbReference>
<dbReference type="HAMAP" id="MF_01345_B">
    <property type="entry name" value="Ribosomal_uS17_B"/>
    <property type="match status" value="1"/>
</dbReference>
<dbReference type="InterPro" id="IPR012340">
    <property type="entry name" value="NA-bd_OB-fold"/>
</dbReference>
<dbReference type="InterPro" id="IPR000266">
    <property type="entry name" value="Ribosomal_uS17"/>
</dbReference>
<dbReference type="InterPro" id="IPR019984">
    <property type="entry name" value="Ribosomal_uS17_bact/chlr"/>
</dbReference>
<dbReference type="InterPro" id="IPR019979">
    <property type="entry name" value="Ribosomal_uS17_CS"/>
</dbReference>
<dbReference type="NCBIfam" id="NF004123">
    <property type="entry name" value="PRK05610.1"/>
    <property type="match status" value="1"/>
</dbReference>
<dbReference type="NCBIfam" id="TIGR03635">
    <property type="entry name" value="uS17_bact"/>
    <property type="match status" value="1"/>
</dbReference>
<dbReference type="PANTHER" id="PTHR10744">
    <property type="entry name" value="40S RIBOSOMAL PROTEIN S11 FAMILY MEMBER"/>
    <property type="match status" value="1"/>
</dbReference>
<dbReference type="PANTHER" id="PTHR10744:SF1">
    <property type="entry name" value="SMALL RIBOSOMAL SUBUNIT PROTEIN US17M"/>
    <property type="match status" value="1"/>
</dbReference>
<dbReference type="Pfam" id="PF00366">
    <property type="entry name" value="Ribosomal_S17"/>
    <property type="match status" value="1"/>
</dbReference>
<dbReference type="PRINTS" id="PR00973">
    <property type="entry name" value="RIBOSOMALS17"/>
</dbReference>
<dbReference type="SUPFAM" id="SSF50249">
    <property type="entry name" value="Nucleic acid-binding proteins"/>
    <property type="match status" value="1"/>
</dbReference>
<dbReference type="PROSITE" id="PS00056">
    <property type="entry name" value="RIBOSOMAL_S17"/>
    <property type="match status" value="1"/>
</dbReference>
<comment type="function">
    <text evidence="1">One of the primary rRNA binding proteins, it binds specifically to the 5'-end of 16S ribosomal RNA.</text>
</comment>
<comment type="subunit">
    <text evidence="1">Part of the 30S ribosomal subunit.</text>
</comment>
<comment type="similarity">
    <text evidence="1">Belongs to the universal ribosomal protein uS17 family.</text>
</comment>
<feature type="chain" id="PRO_0000233621" description="Small ribosomal subunit protein uS17">
    <location>
        <begin position="1"/>
        <end position="84"/>
    </location>
</feature>
<evidence type="ECO:0000255" key="1">
    <source>
        <dbReference type="HAMAP-Rule" id="MF_01345"/>
    </source>
</evidence>
<evidence type="ECO:0000305" key="2"/>